<proteinExistence type="predicted"/>
<reference key="1">
    <citation type="journal article" date="1998" name="Science">
        <title>Genome sequence of the nematode C. elegans: a platform for investigating biology.</title>
        <authorList>
            <consortium name="The C. elegans sequencing consortium"/>
        </authorList>
    </citation>
    <scope>NUCLEOTIDE SEQUENCE [LARGE SCALE GENOMIC DNA]</scope>
    <source>
        <strain>Bristol N2</strain>
    </source>
</reference>
<name>YQY2_CAEEL</name>
<organism>
    <name type="scientific">Caenorhabditis elegans</name>
    <dbReference type="NCBI Taxonomy" id="6239"/>
    <lineage>
        <taxon>Eukaryota</taxon>
        <taxon>Metazoa</taxon>
        <taxon>Ecdysozoa</taxon>
        <taxon>Nematoda</taxon>
        <taxon>Chromadorea</taxon>
        <taxon>Rhabditida</taxon>
        <taxon>Rhabditina</taxon>
        <taxon>Rhabditomorpha</taxon>
        <taxon>Rhabditoidea</taxon>
        <taxon>Rhabditidae</taxon>
        <taxon>Peloderinae</taxon>
        <taxon>Caenorhabditis</taxon>
    </lineage>
</organism>
<protein>
    <recommendedName>
        <fullName>Uncharacterized protein F36G3.2</fullName>
    </recommendedName>
</protein>
<dbReference type="EMBL" id="Z47069">
    <property type="protein sequence ID" value="CAA87337.1"/>
    <property type="molecule type" value="Genomic_DNA"/>
</dbReference>
<dbReference type="PIR" id="T21864">
    <property type="entry name" value="T21864"/>
</dbReference>
<dbReference type="RefSeq" id="NP_001369862.1">
    <property type="nucleotide sequence ID" value="NM_001383630.2"/>
</dbReference>
<dbReference type="RefSeq" id="NP_509643.1">
    <property type="nucleotide sequence ID" value="NM_077242.3"/>
</dbReference>
<dbReference type="SMR" id="Q09318"/>
<dbReference type="BioGRID" id="46107">
    <property type="interactions" value="2"/>
</dbReference>
<dbReference type="DIP" id="DIP-24735N"/>
<dbReference type="FunCoup" id="Q09318">
    <property type="interactions" value="1"/>
</dbReference>
<dbReference type="PaxDb" id="6239-F36G3.2"/>
<dbReference type="PeptideAtlas" id="Q09318"/>
<dbReference type="EnsemblMetazoa" id="F36G3.2.1">
    <property type="protein sequence ID" value="F36G3.2.1"/>
    <property type="gene ID" value="WBGene00009483"/>
</dbReference>
<dbReference type="GeneID" id="181192"/>
<dbReference type="UCSC" id="F36G3.2">
    <property type="organism name" value="c. elegans"/>
</dbReference>
<dbReference type="AGR" id="WB:WBGene00009483"/>
<dbReference type="WormBase" id="F36G3.2">
    <property type="protein sequence ID" value="CE01577"/>
    <property type="gene ID" value="WBGene00009483"/>
</dbReference>
<dbReference type="eggNOG" id="ENOG502S9B9">
    <property type="taxonomic scope" value="Eukaryota"/>
</dbReference>
<dbReference type="GeneTree" id="ENSGT00970000196245"/>
<dbReference type="HOGENOM" id="CLU_077505_0_0_1"/>
<dbReference type="InParanoid" id="Q09318"/>
<dbReference type="OMA" id="CVIWNEY"/>
<dbReference type="OrthoDB" id="5871931at2759"/>
<dbReference type="PhylomeDB" id="Q09318"/>
<dbReference type="PRO" id="PR:Q09318"/>
<dbReference type="Proteomes" id="UP000001940">
    <property type="component" value="Chromosome X"/>
</dbReference>
<dbReference type="Bgee" id="WBGene00009483">
    <property type="expression patterns" value="Expressed in larva and 3 other cell types or tissues"/>
</dbReference>
<dbReference type="GO" id="GO:0016747">
    <property type="term" value="F:acyltransferase activity, transferring groups other than amino-acyl groups"/>
    <property type="evidence" value="ECO:0007669"/>
    <property type="project" value="InterPro"/>
</dbReference>
<dbReference type="CDD" id="cd04301">
    <property type="entry name" value="NAT_SF"/>
    <property type="match status" value="1"/>
</dbReference>
<dbReference type="Gene3D" id="3.40.630.30">
    <property type="match status" value="1"/>
</dbReference>
<dbReference type="InterPro" id="IPR052729">
    <property type="entry name" value="Acyl/Acetyltrans_Enzymes"/>
</dbReference>
<dbReference type="InterPro" id="IPR016181">
    <property type="entry name" value="Acyl_CoA_acyltransferase"/>
</dbReference>
<dbReference type="InterPro" id="IPR000182">
    <property type="entry name" value="GNAT_dom"/>
</dbReference>
<dbReference type="PANTHER" id="PTHR47237">
    <property type="entry name" value="SLL0310 PROTEIN"/>
    <property type="match status" value="1"/>
</dbReference>
<dbReference type="PANTHER" id="PTHR47237:SF1">
    <property type="entry name" value="SLL0310 PROTEIN"/>
    <property type="match status" value="1"/>
</dbReference>
<dbReference type="Pfam" id="PF00583">
    <property type="entry name" value="Acetyltransf_1"/>
    <property type="match status" value="1"/>
</dbReference>
<dbReference type="SUPFAM" id="SSF55729">
    <property type="entry name" value="Acyl-CoA N-acyltransferases (Nat)"/>
    <property type="match status" value="1"/>
</dbReference>
<dbReference type="PROSITE" id="PS51186">
    <property type="entry name" value="GNAT"/>
    <property type="match status" value="1"/>
</dbReference>
<keyword id="KW-1185">Reference proteome</keyword>
<accession>Q09318</accession>
<gene>
    <name type="ORF">F36G3.2</name>
</gene>
<comment type="function">
    <text>To the C-terminal of C.elegans F21C10.9.</text>
</comment>
<feature type="chain" id="PRO_0000065324" description="Uncharacterized protein F36G3.2">
    <location>
        <begin position="1"/>
        <end position="313"/>
    </location>
</feature>
<feature type="domain" description="N-acetyltransferase" evidence="1">
    <location>
        <begin position="6"/>
        <end position="152"/>
    </location>
</feature>
<sequence length="313" mass="35418">MSEVSYDILENPEPNSHLWKQWKNLVDTEGWTSDDNSVTALTPSMPSTRSVWAVSKTAENDFVGCVIWNEYNKICFLGFFLLAPEYRGKGVGSVIWDIAMSRMPADHTLGLRGVPSMVDKYRKKATPFVGATLENYKMKVAEYHASMEKMTGDNFKLVSHLTPVEFDQLVRYDSDVNGRNRREFLELYYKLDCVLGVVLFDQHHKIIAHISAVRTSHKEDNVFKIAPLYADSPSIAMSALRVFSGVMFELHPEADVLFHLLDVGSGAFLQSFFQSLEIIPAVSGVTLFSNEWPNKGDLSKVFIAHNNSCHFDY</sequence>
<evidence type="ECO:0000255" key="1">
    <source>
        <dbReference type="PROSITE-ProRule" id="PRU00532"/>
    </source>
</evidence>